<evidence type="ECO:0000255" key="1">
    <source>
        <dbReference type="HAMAP-Rule" id="MF_00491"/>
    </source>
</evidence>
<feature type="chain" id="PRO_0000343229" description="NAD(P)H-quinone oxidoreductase chain 4 1">
    <location>
        <begin position="1"/>
        <end position="538"/>
    </location>
</feature>
<feature type="transmembrane region" description="Helical" evidence="1">
    <location>
        <begin position="7"/>
        <end position="27"/>
    </location>
</feature>
<feature type="transmembrane region" description="Helical" evidence="1">
    <location>
        <begin position="37"/>
        <end position="57"/>
    </location>
</feature>
<feature type="transmembrane region" description="Helical" evidence="1">
    <location>
        <begin position="88"/>
        <end position="108"/>
    </location>
</feature>
<feature type="transmembrane region" description="Helical" evidence="1">
    <location>
        <begin position="116"/>
        <end position="136"/>
    </location>
</feature>
<feature type="transmembrane region" description="Helical" evidence="1">
    <location>
        <begin position="137"/>
        <end position="157"/>
    </location>
</feature>
<feature type="transmembrane region" description="Helical" evidence="1">
    <location>
        <begin position="170"/>
        <end position="190"/>
    </location>
</feature>
<feature type="transmembrane region" description="Helical" evidence="1">
    <location>
        <begin position="210"/>
        <end position="230"/>
    </location>
</feature>
<feature type="transmembrane region" description="Helical" evidence="1">
    <location>
        <begin position="244"/>
        <end position="264"/>
    </location>
</feature>
<feature type="transmembrane region" description="Helical" evidence="1">
    <location>
        <begin position="278"/>
        <end position="298"/>
    </location>
</feature>
<feature type="transmembrane region" description="Helical" evidence="1">
    <location>
        <begin position="315"/>
        <end position="335"/>
    </location>
</feature>
<feature type="transmembrane region" description="Helical" evidence="1">
    <location>
        <begin position="336"/>
        <end position="356"/>
    </location>
</feature>
<feature type="transmembrane region" description="Helical" evidence="1">
    <location>
        <begin position="388"/>
        <end position="408"/>
    </location>
</feature>
<feature type="transmembrane region" description="Helical" evidence="1">
    <location>
        <begin position="418"/>
        <end position="438"/>
    </location>
</feature>
<dbReference type="EC" id="7.1.1.-" evidence="1"/>
<dbReference type="EMBL" id="BA000019">
    <property type="protein sequence ID" value="BAB72306.1"/>
    <property type="molecule type" value="Genomic_DNA"/>
</dbReference>
<dbReference type="PIR" id="AC1850">
    <property type="entry name" value="AC1850"/>
</dbReference>
<dbReference type="SMR" id="Q8YZV7"/>
<dbReference type="STRING" id="103690.gene:10492356"/>
<dbReference type="KEGG" id="ana:alr0348"/>
<dbReference type="eggNOG" id="COG1008">
    <property type="taxonomic scope" value="Bacteria"/>
</dbReference>
<dbReference type="Proteomes" id="UP000002483">
    <property type="component" value="Chromosome"/>
</dbReference>
<dbReference type="GO" id="GO:0031676">
    <property type="term" value="C:plasma membrane-derived thylakoid membrane"/>
    <property type="evidence" value="ECO:0007669"/>
    <property type="project" value="UniProtKB-SubCell"/>
</dbReference>
<dbReference type="GO" id="GO:0008137">
    <property type="term" value="F:NADH dehydrogenase (ubiquinone) activity"/>
    <property type="evidence" value="ECO:0007669"/>
    <property type="project" value="InterPro"/>
</dbReference>
<dbReference type="GO" id="GO:0048039">
    <property type="term" value="F:ubiquinone binding"/>
    <property type="evidence" value="ECO:0007669"/>
    <property type="project" value="TreeGrafter"/>
</dbReference>
<dbReference type="GO" id="GO:0042773">
    <property type="term" value="P:ATP synthesis coupled electron transport"/>
    <property type="evidence" value="ECO:0007669"/>
    <property type="project" value="InterPro"/>
</dbReference>
<dbReference type="GO" id="GO:0015990">
    <property type="term" value="P:electron transport coupled proton transport"/>
    <property type="evidence" value="ECO:0007669"/>
    <property type="project" value="TreeGrafter"/>
</dbReference>
<dbReference type="HAMAP" id="MF_00491">
    <property type="entry name" value="NDH1_NuoM"/>
    <property type="match status" value="1"/>
</dbReference>
<dbReference type="InterPro" id="IPR022997">
    <property type="entry name" value="NADH_Q_OxRdtase_chain4"/>
</dbReference>
<dbReference type="InterPro" id="IPR010227">
    <property type="entry name" value="NADH_Q_OxRdtase_chainM/4"/>
</dbReference>
<dbReference type="InterPro" id="IPR003918">
    <property type="entry name" value="NADH_UbQ_OxRdtase"/>
</dbReference>
<dbReference type="InterPro" id="IPR001750">
    <property type="entry name" value="ND/Mrp_TM"/>
</dbReference>
<dbReference type="NCBIfam" id="TIGR01972">
    <property type="entry name" value="NDH_I_M"/>
    <property type="match status" value="1"/>
</dbReference>
<dbReference type="NCBIfam" id="NF009212">
    <property type="entry name" value="PRK12561.1"/>
    <property type="match status" value="1"/>
</dbReference>
<dbReference type="PANTHER" id="PTHR43507:SF21">
    <property type="entry name" value="NAD(P)H-QUINONE OXIDOREDUCTASE CHAIN 4, CHLOROPLASTIC"/>
    <property type="match status" value="1"/>
</dbReference>
<dbReference type="PANTHER" id="PTHR43507">
    <property type="entry name" value="NADH-UBIQUINONE OXIDOREDUCTASE CHAIN 4"/>
    <property type="match status" value="1"/>
</dbReference>
<dbReference type="Pfam" id="PF00361">
    <property type="entry name" value="Proton_antipo_M"/>
    <property type="match status" value="1"/>
</dbReference>
<dbReference type="PRINTS" id="PR01437">
    <property type="entry name" value="NUOXDRDTASE4"/>
</dbReference>
<proteinExistence type="inferred from homology"/>
<reference key="1">
    <citation type="journal article" date="2001" name="DNA Res.">
        <title>Complete genomic sequence of the filamentous nitrogen-fixing cyanobacterium Anabaena sp. strain PCC 7120.</title>
        <authorList>
            <person name="Kaneko T."/>
            <person name="Nakamura Y."/>
            <person name="Wolk C.P."/>
            <person name="Kuritz T."/>
            <person name="Sasamoto S."/>
            <person name="Watanabe A."/>
            <person name="Iriguchi M."/>
            <person name="Ishikawa A."/>
            <person name="Kawashima K."/>
            <person name="Kimura T."/>
            <person name="Kishida Y."/>
            <person name="Kohara M."/>
            <person name="Matsumoto M."/>
            <person name="Matsuno A."/>
            <person name="Muraki A."/>
            <person name="Nakazaki N."/>
            <person name="Shimpo S."/>
            <person name="Sugimoto M."/>
            <person name="Takazawa M."/>
            <person name="Yamada M."/>
            <person name="Yasuda M."/>
            <person name="Tabata S."/>
        </authorList>
    </citation>
    <scope>NUCLEOTIDE SEQUENCE [LARGE SCALE GENOMIC DNA]</scope>
    <source>
        <strain>PCC 7120 / SAG 25.82 / UTEX 2576</strain>
    </source>
</reference>
<organism>
    <name type="scientific">Nostoc sp. (strain PCC 7120 / SAG 25.82 / UTEX 2576)</name>
    <dbReference type="NCBI Taxonomy" id="103690"/>
    <lineage>
        <taxon>Bacteria</taxon>
        <taxon>Bacillati</taxon>
        <taxon>Cyanobacteriota</taxon>
        <taxon>Cyanophyceae</taxon>
        <taxon>Nostocales</taxon>
        <taxon>Nostocaceae</taxon>
        <taxon>Nostoc</taxon>
    </lineage>
</organism>
<name>NU4C1_NOSS1</name>
<keyword id="KW-0472">Membrane</keyword>
<keyword id="KW-0520">NAD</keyword>
<keyword id="KW-0521">NADP</keyword>
<keyword id="KW-0618">Plastoquinone</keyword>
<keyword id="KW-0874">Quinone</keyword>
<keyword id="KW-1185">Reference proteome</keyword>
<keyword id="KW-0793">Thylakoid</keyword>
<keyword id="KW-1278">Translocase</keyword>
<keyword id="KW-0812">Transmembrane</keyword>
<keyword id="KW-1133">Transmembrane helix</keyword>
<sequence>MMNLIEFPWLTAIIALPLVAALAIPIIPDKEGKTVRWYGLGVAFADFALMIAAFWHYYDFQSSSYQFVEKYAWVPQIGLNWSVAVDGLSMPLLLLTGLINTLAIFAAWKVTNKPRLFYGLMLVMYSAQLGVFVAQDLLLFFLMWEIELVPVYLLISIWGGPKRRYAATKFILYTAAASIFILVAGFALAFSGDTVTFDIAALGMKEYPKAIELLAYAGFLIAFGVKLPIFPLHTWLPDAHGEASAPGSMILAGVLLKMGGYALIRFNMEMLPDAHVYFAPVLAILGVVNIVYGACCAFAQTNLKRRLAYSSIAHMGFVLIGLASYTEIGVSGAVLQMVSHGLVAASLFFLTGVTYERTHTLLMDKMGGIGKIMPKTFALYTAGAMASLALPGMSGFVGELMVFIGIATSDVYSSSFKVVVVLLSAVGVILTPIYLLSMLRQVFYGKQSDELHLDAFVPDVKPRELFITASLLLPIIGIGLYPKLITQTYDAKTVEIAAHARQVLPVVAGQQPSSLYSQIFTAPTLANAQVESLVNISK</sequence>
<comment type="function">
    <text evidence="1">NDH-1 shuttles electrons from NAD(P)H, via FMN and iron-sulfur (Fe-S) centers, to quinones in the respiratory chain. The immediate electron acceptor for the enzyme in this species is believed to be plastoquinone. Couples the redox reaction to proton translocation (for every two electrons transferred, four hydrogen ions are translocated across the cytoplasmic membrane), and thus conserves the redox energy in a proton gradient.</text>
</comment>
<comment type="catalytic activity">
    <reaction evidence="1">
        <text>a plastoquinone + NADH + (n+1) H(+)(in) = a plastoquinol + NAD(+) + n H(+)(out)</text>
        <dbReference type="Rhea" id="RHEA:42608"/>
        <dbReference type="Rhea" id="RHEA-COMP:9561"/>
        <dbReference type="Rhea" id="RHEA-COMP:9562"/>
        <dbReference type="ChEBI" id="CHEBI:15378"/>
        <dbReference type="ChEBI" id="CHEBI:17757"/>
        <dbReference type="ChEBI" id="CHEBI:57540"/>
        <dbReference type="ChEBI" id="CHEBI:57945"/>
        <dbReference type="ChEBI" id="CHEBI:62192"/>
    </reaction>
</comment>
<comment type="catalytic activity">
    <reaction evidence="1">
        <text>a plastoquinone + NADPH + (n+1) H(+)(in) = a plastoquinol + NADP(+) + n H(+)(out)</text>
        <dbReference type="Rhea" id="RHEA:42612"/>
        <dbReference type="Rhea" id="RHEA-COMP:9561"/>
        <dbReference type="Rhea" id="RHEA-COMP:9562"/>
        <dbReference type="ChEBI" id="CHEBI:15378"/>
        <dbReference type="ChEBI" id="CHEBI:17757"/>
        <dbReference type="ChEBI" id="CHEBI:57783"/>
        <dbReference type="ChEBI" id="CHEBI:58349"/>
        <dbReference type="ChEBI" id="CHEBI:62192"/>
    </reaction>
</comment>
<comment type="subcellular location">
    <subcellularLocation>
        <location evidence="1">Cellular thylakoid membrane</location>
        <topology evidence="1">Multi-pass membrane protein</topology>
    </subcellularLocation>
</comment>
<comment type="similarity">
    <text evidence="1">Belongs to the complex I subunit 4 family.</text>
</comment>
<protein>
    <recommendedName>
        <fullName evidence="1">NAD(P)H-quinone oxidoreductase chain 4 1</fullName>
        <ecNumber evidence="1">7.1.1.-</ecNumber>
    </recommendedName>
    <alternativeName>
        <fullName evidence="1">NAD(P)H dehydrogenase I, chain 4 1</fullName>
    </alternativeName>
    <alternativeName>
        <fullName evidence="1">NDH-1, chain 4 1</fullName>
    </alternativeName>
</protein>
<gene>
    <name evidence="1" type="primary">ndhD1</name>
    <name type="ordered locus">alr0348</name>
</gene>
<accession>Q8YZV7</accession>